<feature type="chain" id="PRO_0000323642" description="DNA-directed RNA polymerase subunit alpha">
    <location>
        <begin position="1"/>
        <end position="342"/>
    </location>
</feature>
<feature type="region of interest" description="Alpha N-terminal domain (alpha-NTD)" evidence="1">
    <location>
        <begin position="1"/>
        <end position="239"/>
    </location>
</feature>
<feature type="region of interest" description="Alpha C-terminal domain (alpha-CTD)" evidence="1">
    <location>
        <begin position="254"/>
        <end position="342"/>
    </location>
</feature>
<proteinExistence type="inferred from homology"/>
<evidence type="ECO:0000255" key="1">
    <source>
        <dbReference type="HAMAP-Rule" id="MF_00059"/>
    </source>
</evidence>
<organism>
    <name type="scientific">Orientia tsutsugamushi (strain Boryong)</name>
    <name type="common">Rickettsia tsutsugamushi</name>
    <dbReference type="NCBI Taxonomy" id="357244"/>
    <lineage>
        <taxon>Bacteria</taxon>
        <taxon>Pseudomonadati</taxon>
        <taxon>Pseudomonadota</taxon>
        <taxon>Alphaproteobacteria</taxon>
        <taxon>Rickettsiales</taxon>
        <taxon>Rickettsiaceae</taxon>
        <taxon>Rickettsieae</taxon>
        <taxon>Orientia</taxon>
    </lineage>
</organism>
<accession>A5CCI9</accession>
<sequence length="342" mass="38068">MTTFLAKNWSSLIKPTKVQYEAVDNNPNIKTMVVEPLERGLGLTLGNSLRRVLLSSLRGAAITSIKIPGVEHELSPVSGVKEDLTDIILNIRDVIVKMDSVQKCNLRLEVTGPAVVTAGMITVTDKQDVTILNPQHVICNLSKGFNLEMDLICEQGKGYVPTSCLHNSDSPIGAIHLDALFNPVRRVSYKVENSMVGQMTNYDKLIITVETNGVVNPDAALGLAARILLDQLQVFINFQEVEEEKPEKLELQTINPVLLKKVYELELSVRSQNCLKNENIVYVGDLVARTETQMLKTANFGRKSLNELKKVLANFNLEFGMKDIGWPPDNLESLAKKHEDQY</sequence>
<name>RPOA_ORITB</name>
<protein>
    <recommendedName>
        <fullName evidence="1">DNA-directed RNA polymerase subunit alpha</fullName>
        <shortName evidence="1">RNAP subunit alpha</shortName>
        <ecNumber evidence="1">2.7.7.6</ecNumber>
    </recommendedName>
    <alternativeName>
        <fullName evidence="1">RNA polymerase subunit alpha</fullName>
    </alternativeName>
    <alternativeName>
        <fullName evidence="1">Transcriptase subunit alpha</fullName>
    </alternativeName>
</protein>
<keyword id="KW-0240">DNA-directed RNA polymerase</keyword>
<keyword id="KW-0548">Nucleotidyltransferase</keyword>
<keyword id="KW-1185">Reference proteome</keyword>
<keyword id="KW-0804">Transcription</keyword>
<keyword id="KW-0808">Transferase</keyword>
<reference key="1">
    <citation type="journal article" date="2007" name="Proc. Natl. Acad. Sci. U.S.A.">
        <title>The Orientia tsutsugamushi genome reveals massive proliferation of conjugative type IV secretion system and host-cell interaction genes.</title>
        <authorList>
            <person name="Cho N.-H."/>
            <person name="Kim H.-R."/>
            <person name="Lee J.-H."/>
            <person name="Kim S.-Y."/>
            <person name="Kim J."/>
            <person name="Cha S."/>
            <person name="Kim S.-Y."/>
            <person name="Darby A.C."/>
            <person name="Fuxelius H.-H."/>
            <person name="Yin J."/>
            <person name="Kim J.H."/>
            <person name="Kim J."/>
            <person name="Lee S.J."/>
            <person name="Koh Y.-S."/>
            <person name="Jang W.-J."/>
            <person name="Park K.-H."/>
            <person name="Andersson S.G.E."/>
            <person name="Choi M.-S."/>
            <person name="Kim I.-S."/>
        </authorList>
    </citation>
    <scope>NUCLEOTIDE SEQUENCE [LARGE SCALE GENOMIC DNA]</scope>
    <source>
        <strain>Boryong</strain>
    </source>
</reference>
<comment type="function">
    <text evidence="1">DNA-dependent RNA polymerase catalyzes the transcription of DNA into RNA using the four ribonucleoside triphosphates as substrates.</text>
</comment>
<comment type="catalytic activity">
    <reaction evidence="1">
        <text>RNA(n) + a ribonucleoside 5'-triphosphate = RNA(n+1) + diphosphate</text>
        <dbReference type="Rhea" id="RHEA:21248"/>
        <dbReference type="Rhea" id="RHEA-COMP:14527"/>
        <dbReference type="Rhea" id="RHEA-COMP:17342"/>
        <dbReference type="ChEBI" id="CHEBI:33019"/>
        <dbReference type="ChEBI" id="CHEBI:61557"/>
        <dbReference type="ChEBI" id="CHEBI:140395"/>
        <dbReference type="EC" id="2.7.7.6"/>
    </reaction>
</comment>
<comment type="subunit">
    <text evidence="1">Homodimer. The RNAP catalytic core consists of 2 alpha, 1 beta, 1 beta' and 1 omega subunit. When a sigma factor is associated with the core the holoenzyme is formed, which can initiate transcription.</text>
</comment>
<comment type="domain">
    <text evidence="1">The N-terminal domain is essential for RNAP assembly and basal transcription, whereas the C-terminal domain is involved in interaction with transcriptional regulators and with upstream promoter elements.</text>
</comment>
<comment type="similarity">
    <text evidence="1">Belongs to the RNA polymerase alpha chain family.</text>
</comment>
<dbReference type="EC" id="2.7.7.6" evidence="1"/>
<dbReference type="EMBL" id="AM494475">
    <property type="protein sequence ID" value="CAM79419.1"/>
    <property type="molecule type" value="Genomic_DNA"/>
</dbReference>
<dbReference type="RefSeq" id="WP_011944417.1">
    <property type="nucleotide sequence ID" value="NC_009488.1"/>
</dbReference>
<dbReference type="SMR" id="A5CCI9"/>
<dbReference type="KEGG" id="ots:OTBS_0353"/>
<dbReference type="eggNOG" id="COG0202">
    <property type="taxonomic scope" value="Bacteria"/>
</dbReference>
<dbReference type="HOGENOM" id="CLU_053084_0_0_5"/>
<dbReference type="Proteomes" id="UP000001565">
    <property type="component" value="Chromosome"/>
</dbReference>
<dbReference type="GO" id="GO:0005737">
    <property type="term" value="C:cytoplasm"/>
    <property type="evidence" value="ECO:0007669"/>
    <property type="project" value="UniProtKB-ARBA"/>
</dbReference>
<dbReference type="GO" id="GO:0000428">
    <property type="term" value="C:DNA-directed RNA polymerase complex"/>
    <property type="evidence" value="ECO:0007669"/>
    <property type="project" value="UniProtKB-KW"/>
</dbReference>
<dbReference type="GO" id="GO:0003677">
    <property type="term" value="F:DNA binding"/>
    <property type="evidence" value="ECO:0007669"/>
    <property type="project" value="UniProtKB-UniRule"/>
</dbReference>
<dbReference type="GO" id="GO:0003899">
    <property type="term" value="F:DNA-directed RNA polymerase activity"/>
    <property type="evidence" value="ECO:0007669"/>
    <property type="project" value="UniProtKB-UniRule"/>
</dbReference>
<dbReference type="GO" id="GO:0046983">
    <property type="term" value="F:protein dimerization activity"/>
    <property type="evidence" value="ECO:0007669"/>
    <property type="project" value="InterPro"/>
</dbReference>
<dbReference type="GO" id="GO:0006351">
    <property type="term" value="P:DNA-templated transcription"/>
    <property type="evidence" value="ECO:0007669"/>
    <property type="project" value="UniProtKB-UniRule"/>
</dbReference>
<dbReference type="CDD" id="cd06928">
    <property type="entry name" value="RNAP_alpha_NTD"/>
    <property type="match status" value="1"/>
</dbReference>
<dbReference type="FunFam" id="1.10.150.20:FF:000001">
    <property type="entry name" value="DNA-directed RNA polymerase subunit alpha"/>
    <property type="match status" value="1"/>
</dbReference>
<dbReference type="FunFam" id="2.170.120.12:FF:000001">
    <property type="entry name" value="DNA-directed RNA polymerase subunit alpha"/>
    <property type="match status" value="1"/>
</dbReference>
<dbReference type="Gene3D" id="1.10.150.20">
    <property type="entry name" value="5' to 3' exonuclease, C-terminal subdomain"/>
    <property type="match status" value="1"/>
</dbReference>
<dbReference type="Gene3D" id="2.170.120.12">
    <property type="entry name" value="DNA-directed RNA polymerase, insert domain"/>
    <property type="match status" value="1"/>
</dbReference>
<dbReference type="Gene3D" id="3.30.1360.10">
    <property type="entry name" value="RNA polymerase, RBP11-like subunit"/>
    <property type="match status" value="1"/>
</dbReference>
<dbReference type="HAMAP" id="MF_00059">
    <property type="entry name" value="RNApol_bact_RpoA"/>
    <property type="match status" value="1"/>
</dbReference>
<dbReference type="InterPro" id="IPR011262">
    <property type="entry name" value="DNA-dir_RNA_pol_insert"/>
</dbReference>
<dbReference type="InterPro" id="IPR011263">
    <property type="entry name" value="DNA-dir_RNA_pol_RpoA/D/Rpb3"/>
</dbReference>
<dbReference type="InterPro" id="IPR011773">
    <property type="entry name" value="DNA-dir_RpoA"/>
</dbReference>
<dbReference type="InterPro" id="IPR036603">
    <property type="entry name" value="RBP11-like"/>
</dbReference>
<dbReference type="InterPro" id="IPR011260">
    <property type="entry name" value="RNAP_asu_C"/>
</dbReference>
<dbReference type="InterPro" id="IPR036643">
    <property type="entry name" value="RNApol_insert_sf"/>
</dbReference>
<dbReference type="NCBIfam" id="NF003513">
    <property type="entry name" value="PRK05182.1-2"/>
    <property type="match status" value="1"/>
</dbReference>
<dbReference type="NCBIfam" id="NF003519">
    <property type="entry name" value="PRK05182.2-5"/>
    <property type="match status" value="1"/>
</dbReference>
<dbReference type="NCBIfam" id="TIGR02027">
    <property type="entry name" value="rpoA"/>
    <property type="match status" value="1"/>
</dbReference>
<dbReference type="Pfam" id="PF01000">
    <property type="entry name" value="RNA_pol_A_bac"/>
    <property type="match status" value="1"/>
</dbReference>
<dbReference type="Pfam" id="PF03118">
    <property type="entry name" value="RNA_pol_A_CTD"/>
    <property type="match status" value="1"/>
</dbReference>
<dbReference type="Pfam" id="PF01193">
    <property type="entry name" value="RNA_pol_L"/>
    <property type="match status" value="1"/>
</dbReference>
<dbReference type="SMART" id="SM00662">
    <property type="entry name" value="RPOLD"/>
    <property type="match status" value="1"/>
</dbReference>
<dbReference type="SUPFAM" id="SSF47789">
    <property type="entry name" value="C-terminal domain of RNA polymerase alpha subunit"/>
    <property type="match status" value="1"/>
</dbReference>
<dbReference type="SUPFAM" id="SSF56553">
    <property type="entry name" value="Insert subdomain of RNA polymerase alpha subunit"/>
    <property type="match status" value="1"/>
</dbReference>
<dbReference type="SUPFAM" id="SSF55257">
    <property type="entry name" value="RBP11-like subunits of RNA polymerase"/>
    <property type="match status" value="1"/>
</dbReference>
<gene>
    <name evidence="1" type="primary">rpoA</name>
    <name type="ordered locus">OTBS_0353</name>
</gene>